<protein>
    <recommendedName>
        <fullName evidence="2">6,7-dimethyl-8-ribityllumazine synthase 2</fullName>
        <shortName evidence="2">DMRL synthase 2</shortName>
        <shortName evidence="2">LS 2</shortName>
        <shortName evidence="2">Lumazine synthase 2</shortName>
        <ecNumber evidence="2">2.5.1.78</ecNumber>
    </recommendedName>
    <alternativeName>
        <fullName evidence="1">BLS</fullName>
    </alternativeName>
    <alternativeName>
        <fullName evidence="1">Type II lumazine synthase</fullName>
    </alternativeName>
</protein>
<feature type="chain" id="PRO_0000134725" description="6,7-dimethyl-8-ribityllumazine synthase 2">
    <location>
        <begin position="1"/>
        <end position="158"/>
    </location>
</feature>
<feature type="active site" description="Proton donor" evidence="2">
    <location>
        <position position="86"/>
    </location>
</feature>
<feature type="binding site" evidence="2">
    <location>
        <position position="20"/>
    </location>
    <ligand>
        <name>5-amino-6-(D-ribitylamino)uracil</name>
        <dbReference type="ChEBI" id="CHEBI:15934"/>
    </ligand>
</feature>
<feature type="binding site" evidence="2">
    <location>
        <begin position="54"/>
        <end position="56"/>
    </location>
    <ligand>
        <name>5-amino-6-(D-ribitylamino)uracil</name>
        <dbReference type="ChEBI" id="CHEBI:15934"/>
    </ligand>
</feature>
<feature type="binding site" evidence="2">
    <location>
        <begin position="78"/>
        <end position="80"/>
    </location>
    <ligand>
        <name>5-amino-6-(D-ribitylamino)uracil</name>
        <dbReference type="ChEBI" id="CHEBI:15934"/>
    </ligand>
</feature>
<feature type="binding site" evidence="2">
    <location>
        <position position="111"/>
    </location>
    <ligand>
        <name>5-amino-6-(D-ribitylamino)uracil</name>
        <dbReference type="ChEBI" id="CHEBI:15934"/>
    </ligand>
</feature>
<feature type="binding site" evidence="2">
    <location>
        <position position="125"/>
    </location>
    <ligand>
        <name>(2S)-2-hydroxy-3-oxobutyl phosphate</name>
        <dbReference type="ChEBI" id="CHEBI:58830"/>
    </ligand>
</feature>
<proteinExistence type="inferred from homology"/>
<sequence>MNQSCPNKTSFKIAFIQARWHADIVDEARKSFVAELAAKTGGSVEVEIFDVPGAYEIPLHAKTLARTGRYAAIVGAAFVIDGGIYRHDFVATAVINGMMQVQLETEVPVLSVVLTPHHFHESKEHHDFFHAHFKVKGVEAAHAALQIVSERSRIAALV</sequence>
<name>RISB2_BRUAB</name>
<keyword id="KW-0963">Cytoplasm</keyword>
<keyword id="KW-0686">Riboflavin biosynthesis</keyword>
<keyword id="KW-0808">Transferase</keyword>
<accession>P61711</accession>
<accession>Q44668</accession>
<accession>Q578I1</accession>
<dbReference type="EC" id="2.5.1.78" evidence="2"/>
<dbReference type="EMBL" id="Z46864">
    <property type="protein sequence ID" value="CAA86936.1"/>
    <property type="molecule type" value="Genomic_DNA"/>
</dbReference>
<dbReference type="EMBL" id="AE017224">
    <property type="protein sequence ID" value="AAX75953.1"/>
    <property type="molecule type" value="Genomic_DNA"/>
</dbReference>
<dbReference type="PIR" id="S49918">
    <property type="entry name" value="S49918"/>
</dbReference>
<dbReference type="RefSeq" id="WP_002965946.1">
    <property type="nucleotide sequence ID" value="NC_006933.1"/>
</dbReference>
<dbReference type="SMR" id="P61711"/>
<dbReference type="EnsemblBacteria" id="AAX75953">
    <property type="protein sequence ID" value="AAX75953"/>
    <property type="gene ID" value="BruAb2_0535"/>
</dbReference>
<dbReference type="KEGG" id="bmb:BruAb2_0535"/>
<dbReference type="HOGENOM" id="CLU_089358_0_0_5"/>
<dbReference type="BRENDA" id="2.5.1.78">
    <property type="organism ID" value="994"/>
</dbReference>
<dbReference type="UniPathway" id="UPA00275">
    <property type="reaction ID" value="UER00404"/>
</dbReference>
<dbReference type="EvolutionaryTrace" id="P61711"/>
<dbReference type="PRO" id="PR:P61711"/>
<dbReference type="Proteomes" id="UP000000540">
    <property type="component" value="Chromosome II"/>
</dbReference>
<dbReference type="GO" id="GO:0005829">
    <property type="term" value="C:cytosol"/>
    <property type="evidence" value="ECO:0007669"/>
    <property type="project" value="TreeGrafter"/>
</dbReference>
<dbReference type="GO" id="GO:0009349">
    <property type="term" value="C:riboflavin synthase complex"/>
    <property type="evidence" value="ECO:0007669"/>
    <property type="project" value="InterPro"/>
</dbReference>
<dbReference type="GO" id="GO:0000906">
    <property type="term" value="F:6,7-dimethyl-8-ribityllumazine synthase activity"/>
    <property type="evidence" value="ECO:0007669"/>
    <property type="project" value="UniProtKB-UniRule"/>
</dbReference>
<dbReference type="GO" id="GO:0009231">
    <property type="term" value="P:riboflavin biosynthetic process"/>
    <property type="evidence" value="ECO:0007669"/>
    <property type="project" value="UniProtKB-UniRule"/>
</dbReference>
<dbReference type="CDD" id="cd09208">
    <property type="entry name" value="Lumazine_synthase-II"/>
    <property type="match status" value="1"/>
</dbReference>
<dbReference type="Gene3D" id="3.40.50.960">
    <property type="entry name" value="Lumazine/riboflavin synthase"/>
    <property type="match status" value="1"/>
</dbReference>
<dbReference type="HAMAP" id="MF_00178">
    <property type="entry name" value="Lumazine_synth"/>
    <property type="match status" value="1"/>
</dbReference>
<dbReference type="InterPro" id="IPR034964">
    <property type="entry name" value="LS"/>
</dbReference>
<dbReference type="InterPro" id="IPR002180">
    <property type="entry name" value="LS/RS"/>
</dbReference>
<dbReference type="InterPro" id="IPR036467">
    <property type="entry name" value="LS/RS_sf"/>
</dbReference>
<dbReference type="NCBIfam" id="NF009084">
    <property type="entry name" value="PRK12419.1"/>
    <property type="match status" value="1"/>
</dbReference>
<dbReference type="PANTHER" id="PTHR21058:SF0">
    <property type="entry name" value="6,7-DIMETHYL-8-RIBITYLLUMAZINE SYNTHASE"/>
    <property type="match status" value="1"/>
</dbReference>
<dbReference type="PANTHER" id="PTHR21058">
    <property type="entry name" value="6,7-DIMETHYL-8-RIBITYLLUMAZINE SYNTHASE DMRL SYNTHASE LUMAZINE SYNTHASE"/>
    <property type="match status" value="1"/>
</dbReference>
<dbReference type="Pfam" id="PF00885">
    <property type="entry name" value="DMRL_synthase"/>
    <property type="match status" value="1"/>
</dbReference>
<dbReference type="SUPFAM" id="SSF52121">
    <property type="entry name" value="Lumazine synthase"/>
    <property type="match status" value="1"/>
</dbReference>
<evidence type="ECO:0000250" key="1">
    <source>
        <dbReference type="UniProtKB" id="Q2YKV1"/>
    </source>
</evidence>
<evidence type="ECO:0000255" key="2">
    <source>
        <dbReference type="HAMAP-Rule" id="MF_00178"/>
    </source>
</evidence>
<comment type="function">
    <text evidence="1">Catalyzes the formation of 6,7-dimethyl-8-ribityllumazine by condensation of 5-amino-6-(D-ribitylamino)uracil with 3,4-dihydroxy-2-butanone 4-phosphate. This is the penultimate step in the biosynthesis of riboflavin. Displays low catalytic activity in comparison with the isozyme RibH1. Is a highly immunogenic protein. Activates dendritic cells (DCs) in vitro, increasing the levels of costimulatory molecules and the secretion of pro-inflammatory cytokines, and recruits DCs, B cells and CD8+ T cells in vivo, both effects in a TLR4-dependent manner. Induces the cross presentation of covalently attached peptides and generates a strong and long-lasting humoral immune response without adjuvants; TLR4 signaling is necessary for the induction of the cytotoxic response but not for antigen cross presentation. Elicits a TLR4-mediated protective response against B16 melanoma in mice, slowing tumor growth and prolonging mice survival.</text>
</comment>
<comment type="catalytic activity">
    <reaction evidence="2">
        <text>(2S)-2-hydroxy-3-oxobutyl phosphate + 5-amino-6-(D-ribitylamino)uracil = 6,7-dimethyl-8-(1-D-ribityl)lumazine + phosphate + 2 H2O + H(+)</text>
        <dbReference type="Rhea" id="RHEA:26152"/>
        <dbReference type="ChEBI" id="CHEBI:15377"/>
        <dbReference type="ChEBI" id="CHEBI:15378"/>
        <dbReference type="ChEBI" id="CHEBI:15934"/>
        <dbReference type="ChEBI" id="CHEBI:43474"/>
        <dbReference type="ChEBI" id="CHEBI:58201"/>
        <dbReference type="ChEBI" id="CHEBI:58830"/>
        <dbReference type="EC" id="2.5.1.78"/>
    </reaction>
</comment>
<comment type="pathway">
    <text evidence="2">Cofactor biosynthesis; riboflavin biosynthesis; riboflavin from 2-hydroxy-3-oxobutyl phosphate and 5-amino-6-(D-ribitylamino)uracil: step 1/2.</text>
</comment>
<comment type="subunit">
    <text evidence="1">Homodecamer, arranged as a dimer of pentamers.</text>
</comment>
<comment type="subcellular location">
    <subcellularLocation>
        <location evidence="1">Cytoplasm</location>
    </subcellularLocation>
</comment>
<comment type="induction">
    <text evidence="1">The two ribH genes may be differentially expressed during the Brucella infection cycle. Brucella would use RibH1 for flavin biosynthesis during the extracellular phase and RibH2 during intracellular growth.</text>
</comment>
<comment type="biotechnology">
    <text evidence="1">Could be useful as a specific antigen for the serological diagnosis of active infection of both human and bovine brucellosis. Has been used as a protein carrier of foreign peptides and proteins. The described characteristics of BLS make this protein an ideal antigen carrier for vaccine development. The antitumor effect of BLS could lead to a therapeutic strategy utilizing a TLR4 ligand; as the expression of TLR4 has been reported on a large number of tumors, BLS signaling via TLR4 could make a notable contribution to the success of cancer treatment when coadministered with other cancer vaccines or treatments like radiation or chemotherapy.</text>
</comment>
<comment type="similarity">
    <text evidence="2">Belongs to the DMRL synthase family.</text>
</comment>
<reference key="1">
    <citation type="journal article" date="1995" name="Clin. Diagn. Lab. Immunol.">
        <title>Cloning and sequence analysis of a newly identified Brucella abortus gene and serological evaluation of the 17-kilodalton antigen that it encodes.</title>
        <authorList>
            <person name="Hemmen F."/>
            <person name="Weynants V."/>
            <person name="Scarcez T."/>
            <person name="Letesson J.-J."/>
            <person name="Saman E."/>
        </authorList>
    </citation>
    <scope>NUCLEOTIDE SEQUENCE [GENOMIC DNA]</scope>
</reference>
<reference key="2">
    <citation type="journal article" date="2005" name="J. Bacteriol.">
        <title>Completion of the genome sequence of Brucella abortus and comparison to the highly similar genomes of Brucella melitensis and Brucella suis.</title>
        <authorList>
            <person name="Halling S.M."/>
            <person name="Peterson-Burch B.D."/>
            <person name="Bricker B.J."/>
            <person name="Zuerner R.L."/>
            <person name="Qing Z."/>
            <person name="Li L.-L."/>
            <person name="Kapur V."/>
            <person name="Alt D.P."/>
            <person name="Olsen S.C."/>
        </authorList>
    </citation>
    <scope>NUCLEOTIDE SEQUENCE [LARGE SCALE GENOMIC DNA]</scope>
    <source>
        <strain>9-941</strain>
    </source>
</reference>
<organism>
    <name type="scientific">Brucella abortus biovar 1 (strain 9-941)</name>
    <dbReference type="NCBI Taxonomy" id="262698"/>
    <lineage>
        <taxon>Bacteria</taxon>
        <taxon>Pseudomonadati</taxon>
        <taxon>Pseudomonadota</taxon>
        <taxon>Alphaproteobacteria</taxon>
        <taxon>Hyphomicrobiales</taxon>
        <taxon>Brucellaceae</taxon>
        <taxon>Brucella/Ochrobactrum group</taxon>
        <taxon>Brucella</taxon>
    </lineage>
</organism>
<gene>
    <name type="primary">ribH2</name>
    <name type="synonym">ribH</name>
    <name type="synonym">ribH-2</name>
    <name type="ordered locus">BruAb2_0535</name>
</gene>